<sequence>MSGFKQHTGLVVPLDAANVDTDAIIPKQFLQKVSRLGFGKHLFHDWRFLDDAGERPNPEFVMNAPRYQGASILLARENFGCGSSREHAPWALADYGIKAMIAPSFADIFYGNSINNQMVPVRLTEQEVDELFQFVEANEGAQIEVDLEALKVRANGKEYDFEIDEFRRHCLLNGLDNIGLTLQHEDKIAEYEANIPSFLR</sequence>
<organism>
    <name type="scientific">Vibrio parahaemolyticus serotype O3:K6 (strain RIMD 2210633)</name>
    <dbReference type="NCBI Taxonomy" id="223926"/>
    <lineage>
        <taxon>Bacteria</taxon>
        <taxon>Pseudomonadati</taxon>
        <taxon>Pseudomonadota</taxon>
        <taxon>Gammaproteobacteria</taxon>
        <taxon>Vibrionales</taxon>
        <taxon>Vibrionaceae</taxon>
        <taxon>Vibrio</taxon>
    </lineage>
</organism>
<protein>
    <recommendedName>
        <fullName evidence="1">3-isopropylmalate dehydratase small subunit</fullName>
        <ecNumber evidence="1">4.2.1.33</ecNumber>
    </recommendedName>
    <alternativeName>
        <fullName evidence="1">Alpha-IPM isomerase</fullName>
        <shortName evidence="1">IPMI</shortName>
    </alternativeName>
    <alternativeName>
        <fullName evidence="1">Isopropylmalate isomerase</fullName>
    </alternativeName>
</protein>
<proteinExistence type="inferred from homology"/>
<gene>
    <name evidence="1" type="primary">leuD</name>
    <name type="ordered locus">VP0342</name>
</gene>
<name>LEUD_VIBPA</name>
<dbReference type="EC" id="4.2.1.33" evidence="1"/>
<dbReference type="EMBL" id="BA000031">
    <property type="protein sequence ID" value="BAC58605.1"/>
    <property type="molecule type" value="Genomic_DNA"/>
</dbReference>
<dbReference type="RefSeq" id="NP_796721.1">
    <property type="nucleotide sequence ID" value="NC_004603.1"/>
</dbReference>
<dbReference type="RefSeq" id="WP_005480538.1">
    <property type="nucleotide sequence ID" value="NC_004603.1"/>
</dbReference>
<dbReference type="SMR" id="Q87ST0"/>
<dbReference type="GeneID" id="1187809"/>
<dbReference type="KEGG" id="vpa:VP0342"/>
<dbReference type="PATRIC" id="fig|223926.6.peg.329"/>
<dbReference type="eggNOG" id="COG0066">
    <property type="taxonomic scope" value="Bacteria"/>
</dbReference>
<dbReference type="HOGENOM" id="CLU_081378_0_3_6"/>
<dbReference type="UniPathway" id="UPA00048">
    <property type="reaction ID" value="UER00071"/>
</dbReference>
<dbReference type="Proteomes" id="UP000002493">
    <property type="component" value="Chromosome 1"/>
</dbReference>
<dbReference type="GO" id="GO:0009316">
    <property type="term" value="C:3-isopropylmalate dehydratase complex"/>
    <property type="evidence" value="ECO:0007669"/>
    <property type="project" value="InterPro"/>
</dbReference>
<dbReference type="GO" id="GO:0003861">
    <property type="term" value="F:3-isopropylmalate dehydratase activity"/>
    <property type="evidence" value="ECO:0007669"/>
    <property type="project" value="UniProtKB-UniRule"/>
</dbReference>
<dbReference type="GO" id="GO:0009098">
    <property type="term" value="P:L-leucine biosynthetic process"/>
    <property type="evidence" value="ECO:0007669"/>
    <property type="project" value="UniProtKB-UniRule"/>
</dbReference>
<dbReference type="CDD" id="cd01577">
    <property type="entry name" value="IPMI_Swivel"/>
    <property type="match status" value="1"/>
</dbReference>
<dbReference type="FunFam" id="3.20.19.10:FF:000003">
    <property type="entry name" value="3-isopropylmalate dehydratase small subunit"/>
    <property type="match status" value="1"/>
</dbReference>
<dbReference type="Gene3D" id="3.20.19.10">
    <property type="entry name" value="Aconitase, domain 4"/>
    <property type="match status" value="1"/>
</dbReference>
<dbReference type="HAMAP" id="MF_01031">
    <property type="entry name" value="LeuD_type1"/>
    <property type="match status" value="1"/>
</dbReference>
<dbReference type="InterPro" id="IPR004431">
    <property type="entry name" value="3-IsopropMal_deHydase_ssu"/>
</dbReference>
<dbReference type="InterPro" id="IPR015928">
    <property type="entry name" value="Aconitase/3IPM_dehydase_swvl"/>
</dbReference>
<dbReference type="InterPro" id="IPR000573">
    <property type="entry name" value="AconitaseA/IPMdHydase_ssu_swvl"/>
</dbReference>
<dbReference type="InterPro" id="IPR033940">
    <property type="entry name" value="IPMI_Swivel"/>
</dbReference>
<dbReference type="InterPro" id="IPR050075">
    <property type="entry name" value="LeuD"/>
</dbReference>
<dbReference type="NCBIfam" id="TIGR00171">
    <property type="entry name" value="leuD"/>
    <property type="match status" value="1"/>
</dbReference>
<dbReference type="NCBIfam" id="NF002458">
    <property type="entry name" value="PRK01641.1"/>
    <property type="match status" value="1"/>
</dbReference>
<dbReference type="PANTHER" id="PTHR43345:SF5">
    <property type="entry name" value="3-ISOPROPYLMALATE DEHYDRATASE SMALL SUBUNIT"/>
    <property type="match status" value="1"/>
</dbReference>
<dbReference type="PANTHER" id="PTHR43345">
    <property type="entry name" value="3-ISOPROPYLMALATE DEHYDRATASE SMALL SUBUNIT 2-RELATED-RELATED"/>
    <property type="match status" value="1"/>
</dbReference>
<dbReference type="Pfam" id="PF00694">
    <property type="entry name" value="Aconitase_C"/>
    <property type="match status" value="1"/>
</dbReference>
<dbReference type="SUPFAM" id="SSF52016">
    <property type="entry name" value="LeuD/IlvD-like"/>
    <property type="match status" value="1"/>
</dbReference>
<reference key="1">
    <citation type="journal article" date="2003" name="Lancet">
        <title>Genome sequence of Vibrio parahaemolyticus: a pathogenic mechanism distinct from that of V. cholerae.</title>
        <authorList>
            <person name="Makino K."/>
            <person name="Oshima K."/>
            <person name="Kurokawa K."/>
            <person name="Yokoyama K."/>
            <person name="Uda T."/>
            <person name="Tagomori K."/>
            <person name="Iijima Y."/>
            <person name="Najima M."/>
            <person name="Nakano M."/>
            <person name="Yamashita A."/>
            <person name="Kubota Y."/>
            <person name="Kimura S."/>
            <person name="Yasunaga T."/>
            <person name="Honda T."/>
            <person name="Shinagawa H."/>
            <person name="Hattori M."/>
            <person name="Iida T."/>
        </authorList>
    </citation>
    <scope>NUCLEOTIDE SEQUENCE [LARGE SCALE GENOMIC DNA]</scope>
    <source>
        <strain>RIMD 2210633</strain>
    </source>
</reference>
<comment type="function">
    <text evidence="1">Catalyzes the isomerization between 2-isopropylmalate and 3-isopropylmalate, via the formation of 2-isopropylmaleate.</text>
</comment>
<comment type="catalytic activity">
    <reaction evidence="1">
        <text>(2R,3S)-3-isopropylmalate = (2S)-2-isopropylmalate</text>
        <dbReference type="Rhea" id="RHEA:32287"/>
        <dbReference type="ChEBI" id="CHEBI:1178"/>
        <dbReference type="ChEBI" id="CHEBI:35121"/>
        <dbReference type="EC" id="4.2.1.33"/>
    </reaction>
</comment>
<comment type="pathway">
    <text evidence="1">Amino-acid biosynthesis; L-leucine biosynthesis; L-leucine from 3-methyl-2-oxobutanoate: step 2/4.</text>
</comment>
<comment type="subunit">
    <text evidence="1">Heterodimer of LeuC and LeuD.</text>
</comment>
<comment type="similarity">
    <text evidence="1">Belongs to the LeuD family. LeuD type 1 subfamily.</text>
</comment>
<evidence type="ECO:0000255" key="1">
    <source>
        <dbReference type="HAMAP-Rule" id="MF_01031"/>
    </source>
</evidence>
<accession>Q87ST0</accession>
<feature type="chain" id="PRO_0000141907" description="3-isopropylmalate dehydratase small subunit">
    <location>
        <begin position="1"/>
        <end position="200"/>
    </location>
</feature>
<keyword id="KW-0028">Amino-acid biosynthesis</keyword>
<keyword id="KW-0100">Branched-chain amino acid biosynthesis</keyword>
<keyword id="KW-0432">Leucine biosynthesis</keyword>
<keyword id="KW-0456">Lyase</keyword>